<reference key="1">
    <citation type="journal article" date="2002" name="Genome Res.">
        <title>The genome of Methanosarcina acetivorans reveals extensive metabolic and physiological diversity.</title>
        <authorList>
            <person name="Galagan J.E."/>
            <person name="Nusbaum C."/>
            <person name="Roy A."/>
            <person name="Endrizzi M.G."/>
            <person name="Macdonald P."/>
            <person name="FitzHugh W."/>
            <person name="Calvo S."/>
            <person name="Engels R."/>
            <person name="Smirnov S."/>
            <person name="Atnoor D."/>
            <person name="Brown A."/>
            <person name="Allen N."/>
            <person name="Naylor J."/>
            <person name="Stange-Thomann N."/>
            <person name="DeArellano K."/>
            <person name="Johnson R."/>
            <person name="Linton L."/>
            <person name="McEwan P."/>
            <person name="McKernan K."/>
            <person name="Talamas J."/>
            <person name="Tirrell A."/>
            <person name="Ye W."/>
            <person name="Zimmer A."/>
            <person name="Barber R.D."/>
            <person name="Cann I."/>
            <person name="Graham D.E."/>
            <person name="Grahame D.A."/>
            <person name="Guss A.M."/>
            <person name="Hedderich R."/>
            <person name="Ingram-Smith C."/>
            <person name="Kuettner H.C."/>
            <person name="Krzycki J.A."/>
            <person name="Leigh J.A."/>
            <person name="Li W."/>
            <person name="Liu J."/>
            <person name="Mukhopadhyay B."/>
            <person name="Reeve J.N."/>
            <person name="Smith K."/>
            <person name="Springer T.A."/>
            <person name="Umayam L.A."/>
            <person name="White O."/>
            <person name="White R.H."/>
            <person name="de Macario E.C."/>
            <person name="Ferry J.G."/>
            <person name="Jarrell K.F."/>
            <person name="Jing H."/>
            <person name="Macario A.J.L."/>
            <person name="Paulsen I.T."/>
            <person name="Pritchett M."/>
            <person name="Sowers K.R."/>
            <person name="Swanson R.V."/>
            <person name="Zinder S.H."/>
            <person name="Lander E."/>
            <person name="Metcalf W.W."/>
            <person name="Birren B."/>
        </authorList>
    </citation>
    <scope>NUCLEOTIDE SEQUENCE [LARGE SCALE GENOMIC DNA]</scope>
    <source>
        <strain>ATCC 35395 / DSM 2834 / JCM 12185 / C2A</strain>
    </source>
</reference>
<evidence type="ECO:0000255" key="1">
    <source>
        <dbReference type="HAMAP-Rule" id="MF_00150"/>
    </source>
</evidence>
<comment type="function">
    <text evidence="1">Catalyzes the NADPH-dependent reduction of N-acetyl-5-glutamyl phosphate to yield N-acetyl-L-glutamate 5-semialdehyde.</text>
</comment>
<comment type="catalytic activity">
    <reaction evidence="1">
        <text>N-acetyl-L-glutamate 5-semialdehyde + phosphate + NADP(+) = N-acetyl-L-glutamyl 5-phosphate + NADPH + H(+)</text>
        <dbReference type="Rhea" id="RHEA:21588"/>
        <dbReference type="ChEBI" id="CHEBI:15378"/>
        <dbReference type="ChEBI" id="CHEBI:29123"/>
        <dbReference type="ChEBI" id="CHEBI:43474"/>
        <dbReference type="ChEBI" id="CHEBI:57783"/>
        <dbReference type="ChEBI" id="CHEBI:57936"/>
        <dbReference type="ChEBI" id="CHEBI:58349"/>
        <dbReference type="EC" id="1.2.1.38"/>
    </reaction>
</comment>
<comment type="pathway">
    <text evidence="1">Amino-acid biosynthesis; L-arginine biosynthesis; N(2)-acetyl-L-ornithine from L-glutamate: step 3/4.</text>
</comment>
<comment type="subcellular location">
    <subcellularLocation>
        <location evidence="1">Cytoplasm</location>
    </subcellularLocation>
</comment>
<comment type="similarity">
    <text evidence="1">Belongs to the NAGSA dehydrogenase family. Type 1 subfamily.</text>
</comment>
<protein>
    <recommendedName>
        <fullName evidence="1">N-acetyl-gamma-glutamyl-phosphate reductase</fullName>
        <shortName evidence="1">AGPR</shortName>
        <ecNumber evidence="1">1.2.1.38</ecNumber>
    </recommendedName>
    <alternativeName>
        <fullName evidence="1">N-acetyl-glutamate semialdehyde dehydrogenase</fullName>
        <shortName evidence="1">NAGSA dehydrogenase</shortName>
    </alternativeName>
</protein>
<gene>
    <name evidence="1" type="primary">argC</name>
    <name type="ordered locus">MA_3566</name>
</gene>
<keyword id="KW-0028">Amino-acid biosynthesis</keyword>
<keyword id="KW-0055">Arginine biosynthesis</keyword>
<keyword id="KW-0963">Cytoplasm</keyword>
<keyword id="KW-0521">NADP</keyword>
<keyword id="KW-0560">Oxidoreductase</keyword>
<keyword id="KW-1185">Reference proteome</keyword>
<dbReference type="EC" id="1.2.1.38" evidence="1"/>
<dbReference type="EMBL" id="AE010299">
    <property type="protein sequence ID" value="AAM06927.1"/>
    <property type="molecule type" value="Genomic_DNA"/>
</dbReference>
<dbReference type="SMR" id="Q8TK53"/>
<dbReference type="FunCoup" id="Q8TK53">
    <property type="interactions" value="82"/>
</dbReference>
<dbReference type="STRING" id="188937.MA_3566"/>
<dbReference type="EnsemblBacteria" id="AAM06927">
    <property type="protein sequence ID" value="AAM06927"/>
    <property type="gene ID" value="MA_3566"/>
</dbReference>
<dbReference type="KEGG" id="mac:MA_3566"/>
<dbReference type="HOGENOM" id="CLU_006384_0_1_2"/>
<dbReference type="InParanoid" id="Q8TK53"/>
<dbReference type="PhylomeDB" id="Q8TK53"/>
<dbReference type="UniPathway" id="UPA00068">
    <property type="reaction ID" value="UER00108"/>
</dbReference>
<dbReference type="Proteomes" id="UP000002487">
    <property type="component" value="Chromosome"/>
</dbReference>
<dbReference type="GO" id="GO:0005737">
    <property type="term" value="C:cytoplasm"/>
    <property type="evidence" value="ECO:0007669"/>
    <property type="project" value="UniProtKB-SubCell"/>
</dbReference>
<dbReference type="GO" id="GO:0003942">
    <property type="term" value="F:N-acetyl-gamma-glutamyl-phosphate reductase activity"/>
    <property type="evidence" value="ECO:0007669"/>
    <property type="project" value="UniProtKB-UniRule"/>
</dbReference>
<dbReference type="GO" id="GO:0051287">
    <property type="term" value="F:NAD binding"/>
    <property type="evidence" value="ECO:0007669"/>
    <property type="project" value="InterPro"/>
</dbReference>
<dbReference type="GO" id="GO:0070401">
    <property type="term" value="F:NADP+ binding"/>
    <property type="evidence" value="ECO:0007669"/>
    <property type="project" value="InterPro"/>
</dbReference>
<dbReference type="GO" id="GO:0006526">
    <property type="term" value="P:L-arginine biosynthetic process"/>
    <property type="evidence" value="ECO:0007669"/>
    <property type="project" value="UniProtKB-UniRule"/>
</dbReference>
<dbReference type="CDD" id="cd23934">
    <property type="entry name" value="AGPR_1_C"/>
    <property type="match status" value="1"/>
</dbReference>
<dbReference type="CDD" id="cd17895">
    <property type="entry name" value="AGPR_1_N"/>
    <property type="match status" value="1"/>
</dbReference>
<dbReference type="FunFam" id="3.30.360.10:FF:000014">
    <property type="entry name" value="N-acetyl-gamma-glutamyl-phosphate reductase"/>
    <property type="match status" value="1"/>
</dbReference>
<dbReference type="Gene3D" id="3.30.360.10">
    <property type="entry name" value="Dihydrodipicolinate Reductase, domain 2"/>
    <property type="match status" value="1"/>
</dbReference>
<dbReference type="Gene3D" id="3.40.50.720">
    <property type="entry name" value="NAD(P)-binding Rossmann-like Domain"/>
    <property type="match status" value="1"/>
</dbReference>
<dbReference type="HAMAP" id="MF_00150">
    <property type="entry name" value="ArgC_type1"/>
    <property type="match status" value="1"/>
</dbReference>
<dbReference type="InterPro" id="IPR023013">
    <property type="entry name" value="AGPR_AS"/>
</dbReference>
<dbReference type="InterPro" id="IPR000706">
    <property type="entry name" value="AGPR_type-1"/>
</dbReference>
<dbReference type="InterPro" id="IPR036291">
    <property type="entry name" value="NAD(P)-bd_dom_sf"/>
</dbReference>
<dbReference type="InterPro" id="IPR050085">
    <property type="entry name" value="NAGSA_dehydrogenase"/>
</dbReference>
<dbReference type="InterPro" id="IPR000534">
    <property type="entry name" value="Semialdehyde_DH_NAD-bd"/>
</dbReference>
<dbReference type="NCBIfam" id="TIGR01850">
    <property type="entry name" value="argC"/>
    <property type="match status" value="1"/>
</dbReference>
<dbReference type="PANTHER" id="PTHR32338:SF10">
    <property type="entry name" value="N-ACETYL-GAMMA-GLUTAMYL-PHOSPHATE REDUCTASE, CHLOROPLASTIC-RELATED"/>
    <property type="match status" value="1"/>
</dbReference>
<dbReference type="PANTHER" id="PTHR32338">
    <property type="entry name" value="N-ACETYL-GAMMA-GLUTAMYL-PHOSPHATE REDUCTASE, CHLOROPLASTIC-RELATED-RELATED"/>
    <property type="match status" value="1"/>
</dbReference>
<dbReference type="Pfam" id="PF01118">
    <property type="entry name" value="Semialdhyde_dh"/>
    <property type="match status" value="1"/>
</dbReference>
<dbReference type="Pfam" id="PF22698">
    <property type="entry name" value="Semialdhyde_dhC_1"/>
    <property type="match status" value="1"/>
</dbReference>
<dbReference type="SMART" id="SM00859">
    <property type="entry name" value="Semialdhyde_dh"/>
    <property type="match status" value="1"/>
</dbReference>
<dbReference type="SUPFAM" id="SSF55347">
    <property type="entry name" value="Glyceraldehyde-3-phosphate dehydrogenase-like, C-terminal domain"/>
    <property type="match status" value="1"/>
</dbReference>
<dbReference type="SUPFAM" id="SSF51735">
    <property type="entry name" value="NAD(P)-binding Rossmann-fold domains"/>
    <property type="match status" value="1"/>
</dbReference>
<dbReference type="PROSITE" id="PS01224">
    <property type="entry name" value="ARGC"/>
    <property type="match status" value="1"/>
</dbReference>
<name>ARGC_METAC</name>
<feature type="chain" id="PRO_0000112485" description="N-acetyl-gamma-glutamyl-phosphate reductase">
    <location>
        <begin position="1"/>
        <end position="336"/>
    </location>
</feature>
<feature type="active site" evidence="1">
    <location>
        <position position="144"/>
    </location>
</feature>
<accession>Q8TK53</accession>
<proteinExistence type="inferred from homology"/>
<sequence length="336" mass="36435">MKVGIIGASGYTGGELLRLLVSHPDVRLELATSRSLAGKPVSSTHRHLTGFLDLKYENPVSEEIRERCDVVFVAVPHGTAMNYVPELLDGSTKVIDLSADYRLDTPVFENIYGIKHSDPRKAVYGLVELHPEAAREEFVANPGCFPTGANLAAAPLAAAGLIDIAVFDSKTGISGAGISPTETSHYPNIAENIIPYKLTAHRHRAEILQELTRLDGKLRNISFTPHVIPSIRGILTTAHLFTKEPLSTGDVQEIYEEFYRDKPFVRLPGGVPSLTAVRGSNFCDIGFEADKENNRVVVLSAIDNLVKGASGQAIQNMNLMFGLAETRGLWLPAAAP</sequence>
<organism>
    <name type="scientific">Methanosarcina acetivorans (strain ATCC 35395 / DSM 2834 / JCM 12185 / C2A)</name>
    <dbReference type="NCBI Taxonomy" id="188937"/>
    <lineage>
        <taxon>Archaea</taxon>
        <taxon>Methanobacteriati</taxon>
        <taxon>Methanobacteriota</taxon>
        <taxon>Stenosarchaea group</taxon>
        <taxon>Methanomicrobia</taxon>
        <taxon>Methanosarcinales</taxon>
        <taxon>Methanosarcinaceae</taxon>
        <taxon>Methanosarcina</taxon>
    </lineage>
</organism>